<keyword id="KW-1003">Cell membrane</keyword>
<keyword id="KW-0325">Glycoprotein</keyword>
<keyword id="KW-0472">Membrane</keyword>
<keyword id="KW-1267">Proteomics identification</keyword>
<keyword id="KW-1185">Reference proteome</keyword>
<keyword id="KW-0735">Signal-anchor</keyword>
<keyword id="KW-0812">Transmembrane</keyword>
<keyword id="KW-1133">Transmembrane helix</keyword>
<sequence length="113" mass="12784">MNFYLLLASSILCALIVFWKYRRFQRNTGEMSSNSTALALVRPSSSGLINSNTDNNLAVYDLSRDILNNFPHSIARQKRILVNLSMVENKLVELEHTLLSKGFRGASPHRKST</sequence>
<evidence type="ECO:0000255" key="1"/>
<evidence type="ECO:0000269" key="2">
    <source>
    </source>
</evidence>
<organism>
    <name type="scientific">Homo sapiens</name>
    <name type="common">Human</name>
    <dbReference type="NCBI Taxonomy" id="9606"/>
    <lineage>
        <taxon>Eukaryota</taxon>
        <taxon>Metazoa</taxon>
        <taxon>Chordata</taxon>
        <taxon>Craniata</taxon>
        <taxon>Vertebrata</taxon>
        <taxon>Euteleostomi</taxon>
        <taxon>Mammalia</taxon>
        <taxon>Eutheria</taxon>
        <taxon>Euarchontoglires</taxon>
        <taxon>Primates</taxon>
        <taxon>Haplorrhini</taxon>
        <taxon>Catarrhini</taxon>
        <taxon>Hominidae</taxon>
        <taxon>Homo</taxon>
    </lineage>
</organism>
<feature type="chain" id="PRO_0000293736" description="Kita-kyushu lung cancer antigen 1">
    <location>
        <begin position="1"/>
        <end position="113"/>
    </location>
</feature>
<feature type="topological domain" description="Cytoplasmic" evidence="1">
    <location>
        <begin position="1"/>
        <end position="3"/>
    </location>
</feature>
<feature type="transmembrane region" description="Helical; Signal-anchor for type II membrane protein" evidence="1">
    <location>
        <begin position="4"/>
        <end position="21"/>
    </location>
</feature>
<feature type="topological domain" description="Extracellular" evidence="1">
    <location>
        <begin position="22"/>
        <end position="113"/>
    </location>
</feature>
<feature type="glycosylation site" description="N-linked (GlcNAc...) asparagine" evidence="1">
    <location>
        <position position="83"/>
    </location>
</feature>
<accession>Q5H943</accession>
<name>KKLC1_HUMAN</name>
<gene>
    <name type="primary">CT83</name>
    <name type="synonym">CXorf61</name>
    <name type="synonym">KKLC1</name>
</gene>
<reference key="1">
    <citation type="journal article" date="2005" name="Nature">
        <title>The DNA sequence of the human X chromosome.</title>
        <authorList>
            <person name="Ross M.T."/>
            <person name="Grafham D.V."/>
            <person name="Coffey A.J."/>
            <person name="Scherer S."/>
            <person name="McLay K."/>
            <person name="Muzny D."/>
            <person name="Platzer M."/>
            <person name="Howell G.R."/>
            <person name="Burrows C."/>
            <person name="Bird C.P."/>
            <person name="Frankish A."/>
            <person name="Lovell F.L."/>
            <person name="Howe K.L."/>
            <person name="Ashurst J.L."/>
            <person name="Fulton R.S."/>
            <person name="Sudbrak R."/>
            <person name="Wen G."/>
            <person name="Jones M.C."/>
            <person name="Hurles M.E."/>
            <person name="Andrews T.D."/>
            <person name="Scott C.E."/>
            <person name="Searle S."/>
            <person name="Ramser J."/>
            <person name="Whittaker A."/>
            <person name="Deadman R."/>
            <person name="Carter N.P."/>
            <person name="Hunt S.E."/>
            <person name="Chen R."/>
            <person name="Cree A."/>
            <person name="Gunaratne P."/>
            <person name="Havlak P."/>
            <person name="Hodgson A."/>
            <person name="Metzker M.L."/>
            <person name="Richards S."/>
            <person name="Scott G."/>
            <person name="Steffen D."/>
            <person name="Sodergren E."/>
            <person name="Wheeler D.A."/>
            <person name="Worley K.C."/>
            <person name="Ainscough R."/>
            <person name="Ambrose K.D."/>
            <person name="Ansari-Lari M.A."/>
            <person name="Aradhya S."/>
            <person name="Ashwell R.I."/>
            <person name="Babbage A.K."/>
            <person name="Bagguley C.L."/>
            <person name="Ballabio A."/>
            <person name="Banerjee R."/>
            <person name="Barker G.E."/>
            <person name="Barlow K.F."/>
            <person name="Barrett I.P."/>
            <person name="Bates K.N."/>
            <person name="Beare D.M."/>
            <person name="Beasley H."/>
            <person name="Beasley O."/>
            <person name="Beck A."/>
            <person name="Bethel G."/>
            <person name="Blechschmidt K."/>
            <person name="Brady N."/>
            <person name="Bray-Allen S."/>
            <person name="Bridgeman A.M."/>
            <person name="Brown A.J."/>
            <person name="Brown M.J."/>
            <person name="Bonnin D."/>
            <person name="Bruford E.A."/>
            <person name="Buhay C."/>
            <person name="Burch P."/>
            <person name="Burford D."/>
            <person name="Burgess J."/>
            <person name="Burrill W."/>
            <person name="Burton J."/>
            <person name="Bye J.M."/>
            <person name="Carder C."/>
            <person name="Carrel L."/>
            <person name="Chako J."/>
            <person name="Chapman J.C."/>
            <person name="Chavez D."/>
            <person name="Chen E."/>
            <person name="Chen G."/>
            <person name="Chen Y."/>
            <person name="Chen Z."/>
            <person name="Chinault C."/>
            <person name="Ciccodicola A."/>
            <person name="Clark S.Y."/>
            <person name="Clarke G."/>
            <person name="Clee C.M."/>
            <person name="Clegg S."/>
            <person name="Clerc-Blankenburg K."/>
            <person name="Clifford K."/>
            <person name="Cobley V."/>
            <person name="Cole C.G."/>
            <person name="Conquer J.S."/>
            <person name="Corby N."/>
            <person name="Connor R.E."/>
            <person name="David R."/>
            <person name="Davies J."/>
            <person name="Davis C."/>
            <person name="Davis J."/>
            <person name="Delgado O."/>
            <person name="Deshazo D."/>
            <person name="Dhami P."/>
            <person name="Ding Y."/>
            <person name="Dinh H."/>
            <person name="Dodsworth S."/>
            <person name="Draper H."/>
            <person name="Dugan-Rocha S."/>
            <person name="Dunham A."/>
            <person name="Dunn M."/>
            <person name="Durbin K.J."/>
            <person name="Dutta I."/>
            <person name="Eades T."/>
            <person name="Ellwood M."/>
            <person name="Emery-Cohen A."/>
            <person name="Errington H."/>
            <person name="Evans K.L."/>
            <person name="Faulkner L."/>
            <person name="Francis F."/>
            <person name="Frankland J."/>
            <person name="Fraser A.E."/>
            <person name="Galgoczy P."/>
            <person name="Gilbert J."/>
            <person name="Gill R."/>
            <person name="Gloeckner G."/>
            <person name="Gregory S.G."/>
            <person name="Gribble S."/>
            <person name="Griffiths C."/>
            <person name="Grocock R."/>
            <person name="Gu Y."/>
            <person name="Gwilliam R."/>
            <person name="Hamilton C."/>
            <person name="Hart E.A."/>
            <person name="Hawes A."/>
            <person name="Heath P.D."/>
            <person name="Heitmann K."/>
            <person name="Hennig S."/>
            <person name="Hernandez J."/>
            <person name="Hinzmann B."/>
            <person name="Ho S."/>
            <person name="Hoffs M."/>
            <person name="Howden P.J."/>
            <person name="Huckle E.J."/>
            <person name="Hume J."/>
            <person name="Hunt P.J."/>
            <person name="Hunt A.R."/>
            <person name="Isherwood J."/>
            <person name="Jacob L."/>
            <person name="Johnson D."/>
            <person name="Jones S."/>
            <person name="de Jong P.J."/>
            <person name="Joseph S.S."/>
            <person name="Keenan S."/>
            <person name="Kelly S."/>
            <person name="Kershaw J.K."/>
            <person name="Khan Z."/>
            <person name="Kioschis P."/>
            <person name="Klages S."/>
            <person name="Knights A.J."/>
            <person name="Kosiura A."/>
            <person name="Kovar-Smith C."/>
            <person name="Laird G.K."/>
            <person name="Langford C."/>
            <person name="Lawlor S."/>
            <person name="Leversha M."/>
            <person name="Lewis L."/>
            <person name="Liu W."/>
            <person name="Lloyd C."/>
            <person name="Lloyd D.M."/>
            <person name="Loulseged H."/>
            <person name="Loveland J.E."/>
            <person name="Lovell J.D."/>
            <person name="Lozado R."/>
            <person name="Lu J."/>
            <person name="Lyne R."/>
            <person name="Ma J."/>
            <person name="Maheshwari M."/>
            <person name="Matthews L.H."/>
            <person name="McDowall J."/>
            <person name="McLaren S."/>
            <person name="McMurray A."/>
            <person name="Meidl P."/>
            <person name="Meitinger T."/>
            <person name="Milne S."/>
            <person name="Miner G."/>
            <person name="Mistry S.L."/>
            <person name="Morgan M."/>
            <person name="Morris S."/>
            <person name="Mueller I."/>
            <person name="Mullikin J.C."/>
            <person name="Nguyen N."/>
            <person name="Nordsiek G."/>
            <person name="Nyakatura G."/>
            <person name="O'dell C.N."/>
            <person name="Okwuonu G."/>
            <person name="Palmer S."/>
            <person name="Pandian R."/>
            <person name="Parker D."/>
            <person name="Parrish J."/>
            <person name="Pasternak S."/>
            <person name="Patel D."/>
            <person name="Pearce A.V."/>
            <person name="Pearson D.M."/>
            <person name="Pelan S.E."/>
            <person name="Perez L."/>
            <person name="Porter K.M."/>
            <person name="Ramsey Y."/>
            <person name="Reichwald K."/>
            <person name="Rhodes S."/>
            <person name="Ridler K.A."/>
            <person name="Schlessinger D."/>
            <person name="Schueler M.G."/>
            <person name="Sehra H.K."/>
            <person name="Shaw-Smith C."/>
            <person name="Shen H."/>
            <person name="Sheridan E.M."/>
            <person name="Shownkeen R."/>
            <person name="Skuce C.D."/>
            <person name="Smith M.L."/>
            <person name="Sotheran E.C."/>
            <person name="Steingruber H.E."/>
            <person name="Steward C.A."/>
            <person name="Storey R."/>
            <person name="Swann R.M."/>
            <person name="Swarbreck D."/>
            <person name="Tabor P.E."/>
            <person name="Taudien S."/>
            <person name="Taylor T."/>
            <person name="Teague B."/>
            <person name="Thomas K."/>
            <person name="Thorpe A."/>
            <person name="Timms K."/>
            <person name="Tracey A."/>
            <person name="Trevanion S."/>
            <person name="Tromans A.C."/>
            <person name="d'Urso M."/>
            <person name="Verduzco D."/>
            <person name="Villasana D."/>
            <person name="Waldron L."/>
            <person name="Wall M."/>
            <person name="Wang Q."/>
            <person name="Warren J."/>
            <person name="Warry G.L."/>
            <person name="Wei X."/>
            <person name="West A."/>
            <person name="Whitehead S.L."/>
            <person name="Whiteley M.N."/>
            <person name="Wilkinson J.E."/>
            <person name="Willey D.L."/>
            <person name="Williams G."/>
            <person name="Williams L."/>
            <person name="Williamson A."/>
            <person name="Williamson H."/>
            <person name="Wilming L."/>
            <person name="Woodmansey R.L."/>
            <person name="Wray P.W."/>
            <person name="Yen J."/>
            <person name="Zhang J."/>
            <person name="Zhou J."/>
            <person name="Zoghbi H."/>
            <person name="Zorilla S."/>
            <person name="Buck D."/>
            <person name="Reinhardt R."/>
            <person name="Poustka A."/>
            <person name="Rosenthal A."/>
            <person name="Lehrach H."/>
            <person name="Meindl A."/>
            <person name="Minx P.J."/>
            <person name="Hillier L.W."/>
            <person name="Willard H.F."/>
            <person name="Wilson R.K."/>
            <person name="Waterston R.H."/>
            <person name="Rice C.M."/>
            <person name="Vaudin M."/>
            <person name="Coulson A."/>
            <person name="Nelson D.L."/>
            <person name="Weinstock G."/>
            <person name="Sulston J.E."/>
            <person name="Durbin R.M."/>
            <person name="Hubbard T."/>
            <person name="Gibbs R.A."/>
            <person name="Beck S."/>
            <person name="Rogers J."/>
            <person name="Bentley D.R."/>
        </authorList>
    </citation>
    <scope>NUCLEOTIDE SEQUENCE [LARGE SCALE GENOMIC DNA]</scope>
</reference>
<reference key="2">
    <citation type="journal article" date="2004" name="Genome Res.">
        <title>The status, quality, and expansion of the NIH full-length cDNA project: the Mammalian Gene Collection (MGC).</title>
        <authorList>
            <consortium name="The MGC Project Team"/>
        </authorList>
    </citation>
    <scope>NUCLEOTIDE SEQUENCE [LARGE SCALE MRNA]</scope>
    <source>
        <tissue>Testis</tissue>
    </source>
</reference>
<reference key="3">
    <citation type="journal article" date="2006" name="Cancer Res.">
        <title>Identification of a new cancer/germline gene, KK-LC-1, encoding an antigen recognized by autologous CTL induced on human lung adenocarcinoma.</title>
        <authorList>
            <person name="Fukuyama T."/>
            <person name="Hanagiri T."/>
            <person name="Takenoyama M."/>
            <person name="Ichiki Y."/>
            <person name="Mizukami M."/>
            <person name="So T."/>
            <person name="Sugaya M."/>
            <person name="So T."/>
            <person name="Sugio K."/>
            <person name="Yasumoto K."/>
        </authorList>
    </citation>
    <scope>TOPOLOGY</scope>
    <scope>SUBCELLULAR LOCATION</scope>
    <scope>TISSUE SPECIFICITY</scope>
    <scope>IDENTIFICATION AS A CANCER/TESTIS ANTIGEN</scope>
</reference>
<dbReference type="EMBL" id="Z96810">
    <property type="protein sequence ID" value="CAI42798.1"/>
    <property type="molecule type" value="Genomic_DNA"/>
</dbReference>
<dbReference type="EMBL" id="BC062223">
    <property type="protein sequence ID" value="AAH62223.1"/>
    <property type="molecule type" value="mRNA"/>
</dbReference>
<dbReference type="CCDS" id="CCDS35372.1"/>
<dbReference type="RefSeq" id="NP_001017978.1">
    <property type="nucleotide sequence ID" value="NM_001017978.4"/>
</dbReference>
<dbReference type="SMR" id="Q5H943"/>
<dbReference type="FunCoup" id="Q5H943">
    <property type="interactions" value="75"/>
</dbReference>
<dbReference type="STRING" id="9606.ENSP00000360961"/>
<dbReference type="ChEMBL" id="CHEMBL5169155"/>
<dbReference type="GlyCosmos" id="Q5H943">
    <property type="glycosylation" value="1 site, No reported glycans"/>
</dbReference>
<dbReference type="GlyGen" id="Q5H943">
    <property type="glycosylation" value="2 sites, 2 N-linked glycans (2 sites)"/>
</dbReference>
<dbReference type="iPTMnet" id="Q5H943"/>
<dbReference type="PhosphoSitePlus" id="Q5H943"/>
<dbReference type="BioMuta" id="CT83"/>
<dbReference type="jPOST" id="Q5H943"/>
<dbReference type="MassIVE" id="Q5H943"/>
<dbReference type="PaxDb" id="9606-ENSP00000360961"/>
<dbReference type="PeptideAtlas" id="Q5H943"/>
<dbReference type="ProteomicsDB" id="62868"/>
<dbReference type="Pumba" id="Q5H943"/>
<dbReference type="Antibodypedia" id="591">
    <property type="antibodies" value="73 antibodies from 19 providers"/>
</dbReference>
<dbReference type="DNASU" id="203413"/>
<dbReference type="Ensembl" id="ENST00000371894.5">
    <property type="protein sequence ID" value="ENSP00000360961.4"/>
    <property type="gene ID" value="ENSG00000204019.5"/>
</dbReference>
<dbReference type="GeneID" id="203413"/>
<dbReference type="KEGG" id="hsa:203413"/>
<dbReference type="MANE-Select" id="ENST00000371894.5">
    <property type="protein sequence ID" value="ENSP00000360961.4"/>
    <property type="RefSeq nucleotide sequence ID" value="NM_001017978.4"/>
    <property type="RefSeq protein sequence ID" value="NP_001017978.1"/>
</dbReference>
<dbReference type="UCSC" id="uc004eqj.3">
    <property type="organism name" value="human"/>
</dbReference>
<dbReference type="AGR" id="HGNC:33494"/>
<dbReference type="CTD" id="203413"/>
<dbReference type="DisGeNET" id="203413"/>
<dbReference type="GeneCards" id="CT83"/>
<dbReference type="HGNC" id="HGNC:33494">
    <property type="gene designation" value="CT83"/>
</dbReference>
<dbReference type="HPA" id="ENSG00000204019">
    <property type="expression patterns" value="Tissue enriched (testis)"/>
</dbReference>
<dbReference type="MIM" id="300625">
    <property type="type" value="gene"/>
</dbReference>
<dbReference type="neXtProt" id="NX_Q5H943"/>
<dbReference type="OpenTargets" id="ENSG00000204019"/>
<dbReference type="PharmGKB" id="PA162383081"/>
<dbReference type="VEuPathDB" id="HostDB:ENSG00000204019"/>
<dbReference type="eggNOG" id="ENOG502TE5A">
    <property type="taxonomic scope" value="Eukaryota"/>
</dbReference>
<dbReference type="GeneTree" id="ENSGT00390000018873"/>
<dbReference type="HOGENOM" id="CLU_168652_0_0_1"/>
<dbReference type="InParanoid" id="Q5H943"/>
<dbReference type="OMA" id="MEHFLIT"/>
<dbReference type="OrthoDB" id="9483274at2759"/>
<dbReference type="PAN-GO" id="Q5H943">
    <property type="GO annotations" value="0 GO annotations based on evolutionary models"/>
</dbReference>
<dbReference type="PhylomeDB" id="Q5H943"/>
<dbReference type="SignaLink" id="Q5H943"/>
<dbReference type="BioGRID-ORCS" id="203413">
    <property type="hits" value="28 hits in 749 CRISPR screens"/>
</dbReference>
<dbReference type="GenomeRNAi" id="203413"/>
<dbReference type="Pharos" id="Q5H943">
    <property type="development level" value="Tbio"/>
</dbReference>
<dbReference type="PRO" id="PR:Q5H943"/>
<dbReference type="Proteomes" id="UP000005640">
    <property type="component" value="Chromosome X"/>
</dbReference>
<dbReference type="RNAct" id="Q5H943">
    <property type="molecule type" value="protein"/>
</dbReference>
<dbReference type="Bgee" id="ENSG00000204019">
    <property type="expression patterns" value="Expressed in sperm and 79 other cell types or tissues"/>
</dbReference>
<dbReference type="GO" id="GO:0005634">
    <property type="term" value="C:nucleus"/>
    <property type="evidence" value="ECO:0007005"/>
    <property type="project" value="UniProtKB"/>
</dbReference>
<dbReference type="GO" id="GO:0005886">
    <property type="term" value="C:plasma membrane"/>
    <property type="evidence" value="ECO:0007669"/>
    <property type="project" value="UniProtKB-SubCell"/>
</dbReference>
<dbReference type="InterPro" id="IPR027940">
    <property type="entry name" value="KKLCAg1"/>
</dbReference>
<dbReference type="PANTHER" id="PTHR38650">
    <property type="entry name" value="KITA-KYUSHU LUNG CANCER ANTIGEN 1"/>
    <property type="match status" value="1"/>
</dbReference>
<dbReference type="PANTHER" id="PTHR38650:SF1">
    <property type="entry name" value="KITA-KYUSHU LUNG CANCER ANTIGEN 1"/>
    <property type="match status" value="1"/>
</dbReference>
<dbReference type="Pfam" id="PF15204">
    <property type="entry name" value="KKLCAg1"/>
    <property type="match status" value="1"/>
</dbReference>
<protein>
    <recommendedName>
        <fullName>Kita-kyushu lung cancer antigen 1</fullName>
        <shortName>KK-LC-1</shortName>
    </recommendedName>
    <alternativeName>
        <fullName>Cancer/testis antigen 83</fullName>
    </alternativeName>
</protein>
<comment type="subcellular location">
    <subcellularLocation>
        <location evidence="2">Cell membrane</location>
        <topology evidence="2">Single-pass type II membrane protein</topology>
    </subcellularLocation>
</comment>
<comment type="tissue specificity">
    <text evidence="2">Specifically expressed in testis. Expressed by cancer cell lines.</text>
</comment>
<proteinExistence type="evidence at protein level"/>